<protein>
    <recommendedName>
        <fullName evidence="4">Sulfakinin-1</fullName>
        <shortName evidence="4">DerIn-SK-1</shortName>
    </recommendedName>
</protein>
<organism>
    <name type="scientific">Deropeltis integerrima</name>
    <name type="common">Cockroach</name>
    <name type="synonym">Deropeltis cf. schweinfurthii (strain SR-2005)</name>
    <dbReference type="NCBI Taxonomy" id="596121"/>
    <lineage>
        <taxon>Eukaryota</taxon>
        <taxon>Metazoa</taxon>
        <taxon>Ecdysozoa</taxon>
        <taxon>Arthropoda</taxon>
        <taxon>Hexapoda</taxon>
        <taxon>Insecta</taxon>
        <taxon>Pterygota</taxon>
        <taxon>Neoptera</taxon>
        <taxon>Polyneoptera</taxon>
        <taxon>Dictyoptera</taxon>
        <taxon>Blattodea</taxon>
        <taxon>Blattoidea</taxon>
        <taxon>Blattidae</taxon>
        <taxon>Blattinae</taxon>
        <taxon>Deropeltis</taxon>
    </lineage>
</organism>
<name>SK1_DERIN</name>
<dbReference type="GO" id="GO:0005576">
    <property type="term" value="C:extracellular region"/>
    <property type="evidence" value="ECO:0007669"/>
    <property type="project" value="UniProtKB-SubCell"/>
</dbReference>
<dbReference type="GO" id="GO:0005179">
    <property type="term" value="F:hormone activity"/>
    <property type="evidence" value="ECO:0007669"/>
    <property type="project" value="UniProtKB-KW"/>
</dbReference>
<dbReference type="GO" id="GO:0007218">
    <property type="term" value="P:neuropeptide signaling pathway"/>
    <property type="evidence" value="ECO:0007669"/>
    <property type="project" value="UniProtKB-KW"/>
</dbReference>
<dbReference type="InterPro" id="IPR013152">
    <property type="entry name" value="Gastrin/cholecystokinin_CS"/>
</dbReference>
<dbReference type="InterPro" id="IPR013259">
    <property type="entry name" value="Sulfakinin"/>
</dbReference>
<dbReference type="Pfam" id="PF08257">
    <property type="entry name" value="Sulfakinin"/>
    <property type="match status" value="1"/>
</dbReference>
<dbReference type="PROSITE" id="PS00259">
    <property type="entry name" value="GASTRIN"/>
    <property type="match status" value="1"/>
</dbReference>
<keyword id="KW-0027">Amidation</keyword>
<keyword id="KW-0903">Direct protein sequencing</keyword>
<keyword id="KW-0372">Hormone</keyword>
<keyword id="KW-0527">Neuropeptide</keyword>
<keyword id="KW-0964">Secreted</keyword>
<keyword id="KW-0765">Sulfation</keyword>
<proteinExistence type="evidence at protein level"/>
<sequence length="11" mass="1445">EQFDDYGHMRF</sequence>
<evidence type="ECO:0000250" key="1">
    <source>
        <dbReference type="UniProtKB" id="P41493"/>
    </source>
</evidence>
<evidence type="ECO:0000255" key="2"/>
<evidence type="ECO:0000269" key="3">
    <source>
    </source>
</evidence>
<evidence type="ECO:0000303" key="4">
    <source>
    </source>
</evidence>
<evidence type="ECO:0000305" key="5"/>
<feature type="peptide" id="PRO_0000378870" description="Sulfakinin-1" evidence="3">
    <location>
        <begin position="1"/>
        <end position="11"/>
    </location>
</feature>
<feature type="modified residue" description="Sulfotyrosine" evidence="1">
    <location>
        <position position="6"/>
    </location>
</feature>
<feature type="modified residue" description="Phenylalanine amide" evidence="3">
    <location>
        <position position="11"/>
    </location>
</feature>
<comment type="function">
    <text evidence="1">Myotropic peptide.</text>
</comment>
<comment type="subcellular location">
    <subcellularLocation>
        <location evidence="5">Secreted</location>
    </subcellularLocation>
</comment>
<comment type="similarity">
    <text evidence="2">Belongs to the gastrin/cholecystokinin family.</text>
</comment>
<reference evidence="5" key="1">
    <citation type="journal article" date="2009" name="BMC Evol. Biol.">
        <title>A proteomic approach for studying insect phylogeny: CAPA peptides of ancient insect taxa (Dictyoptera, Blattoptera) as a test case.</title>
        <authorList>
            <person name="Roth S."/>
            <person name="Fromm B."/>
            <person name="Gaede G."/>
            <person name="Predel R."/>
        </authorList>
    </citation>
    <scope>PROTEIN SEQUENCE</scope>
    <scope>AMIDATION AT PHE-11</scope>
    <source>
        <tissue evidence="3">Corpora cardiaca</tissue>
    </source>
</reference>
<accession>P85592</accession>